<protein>
    <recommendedName>
        <fullName evidence="1">Negative modulator of initiation of replication</fullName>
    </recommendedName>
</protein>
<gene>
    <name evidence="1" type="primary">seqA</name>
    <name type="ordered locus">SDY_0627</name>
</gene>
<accession>Q32IN7</accession>
<organism>
    <name type="scientific">Shigella dysenteriae serotype 1 (strain Sd197)</name>
    <dbReference type="NCBI Taxonomy" id="300267"/>
    <lineage>
        <taxon>Bacteria</taxon>
        <taxon>Pseudomonadati</taxon>
        <taxon>Pseudomonadota</taxon>
        <taxon>Gammaproteobacteria</taxon>
        <taxon>Enterobacterales</taxon>
        <taxon>Enterobacteriaceae</taxon>
        <taxon>Shigella</taxon>
    </lineage>
</organism>
<keyword id="KW-0963">Cytoplasm</keyword>
<keyword id="KW-0236">DNA replication inhibitor</keyword>
<keyword id="KW-0238">DNA-binding</keyword>
<keyword id="KW-1185">Reference proteome</keyword>
<sequence>MKTIEVDDELYSYIASHTKHIGESASDILRRMLKFSAASQPAAPVTKEVRVASPAIVEAKPVKTIKDKVRAMRELLLSDEYAEQKRAVNRFMLLLSTLYSLDAQAFAEATESLHGRTRVYFAADEQTLLKNGNQTKPKHVSGTPYWVITNTNTGRKCSMIEHIMLSMQFPAELIEKVCGTI</sequence>
<feature type="chain" id="PRO_0000413941" description="Negative modulator of initiation of replication">
    <location>
        <begin position="1"/>
        <end position="181"/>
    </location>
</feature>
<feature type="region of interest" description="Interaction with DNA" evidence="1">
    <location>
        <begin position="87"/>
        <end position="88"/>
    </location>
</feature>
<feature type="region of interest" description="Interaction with DNA" evidence="1">
    <location>
        <begin position="116"/>
        <end position="120"/>
    </location>
</feature>
<feature type="region of interest" description="Interaction with DNA" evidence="1">
    <location>
        <begin position="150"/>
        <end position="156"/>
    </location>
</feature>
<reference key="1">
    <citation type="journal article" date="2005" name="Nucleic Acids Res.">
        <title>Genome dynamics and diversity of Shigella species, the etiologic agents of bacillary dysentery.</title>
        <authorList>
            <person name="Yang F."/>
            <person name="Yang J."/>
            <person name="Zhang X."/>
            <person name="Chen L."/>
            <person name="Jiang Y."/>
            <person name="Yan Y."/>
            <person name="Tang X."/>
            <person name="Wang J."/>
            <person name="Xiong Z."/>
            <person name="Dong J."/>
            <person name="Xue Y."/>
            <person name="Zhu Y."/>
            <person name="Xu X."/>
            <person name="Sun L."/>
            <person name="Chen S."/>
            <person name="Nie H."/>
            <person name="Peng J."/>
            <person name="Xu J."/>
            <person name="Wang Y."/>
            <person name="Yuan Z."/>
            <person name="Wen Y."/>
            <person name="Yao Z."/>
            <person name="Shen Y."/>
            <person name="Qiang B."/>
            <person name="Hou Y."/>
            <person name="Yu J."/>
            <person name="Jin Q."/>
        </authorList>
    </citation>
    <scope>NUCLEOTIDE SEQUENCE [LARGE SCALE GENOMIC DNA]</scope>
    <source>
        <strain>Sd197</strain>
    </source>
</reference>
<dbReference type="EMBL" id="CP000034">
    <property type="protein sequence ID" value="ABB60820.1"/>
    <property type="molecule type" value="Genomic_DNA"/>
</dbReference>
<dbReference type="RefSeq" id="WP_005019869.1">
    <property type="nucleotide sequence ID" value="NC_007606.1"/>
</dbReference>
<dbReference type="RefSeq" id="YP_402309.1">
    <property type="nucleotide sequence ID" value="NC_007606.1"/>
</dbReference>
<dbReference type="SMR" id="Q32IN7"/>
<dbReference type="STRING" id="300267.SDY_0627"/>
<dbReference type="EnsemblBacteria" id="ABB60820">
    <property type="protein sequence ID" value="ABB60820"/>
    <property type="gene ID" value="SDY_0627"/>
</dbReference>
<dbReference type="KEGG" id="sdy:SDY_0627"/>
<dbReference type="PATRIC" id="fig|300267.13.peg.728"/>
<dbReference type="HOGENOM" id="CLU_099733_0_0_6"/>
<dbReference type="Proteomes" id="UP000002716">
    <property type="component" value="Chromosome"/>
</dbReference>
<dbReference type="GO" id="GO:0005737">
    <property type="term" value="C:cytoplasm"/>
    <property type="evidence" value="ECO:0007669"/>
    <property type="project" value="UniProtKB-SubCell"/>
</dbReference>
<dbReference type="GO" id="GO:0043565">
    <property type="term" value="F:sequence-specific DNA binding"/>
    <property type="evidence" value="ECO:0007669"/>
    <property type="project" value="UniProtKB-ARBA"/>
</dbReference>
<dbReference type="GO" id="GO:0032297">
    <property type="term" value="P:negative regulation of DNA-templated DNA replication initiation"/>
    <property type="evidence" value="ECO:0007669"/>
    <property type="project" value="UniProtKB-UniRule"/>
</dbReference>
<dbReference type="GO" id="GO:0006355">
    <property type="term" value="P:regulation of DNA-templated transcription"/>
    <property type="evidence" value="ECO:0007669"/>
    <property type="project" value="InterPro"/>
</dbReference>
<dbReference type="FunFam" id="1.10.1220.10:FF:000002">
    <property type="entry name" value="Negative modulator of initiation of replication"/>
    <property type="match status" value="1"/>
</dbReference>
<dbReference type="FunFam" id="1.20.1380.10:FF:000001">
    <property type="entry name" value="Negative modulator of initiation of replication"/>
    <property type="match status" value="1"/>
</dbReference>
<dbReference type="Gene3D" id="1.10.1220.10">
    <property type="entry name" value="Met repressor-like"/>
    <property type="match status" value="1"/>
</dbReference>
<dbReference type="Gene3D" id="1.20.1380.10">
    <property type="entry name" value="Replication modulator SeqA, C-terminal DNA-binding domain"/>
    <property type="match status" value="1"/>
</dbReference>
<dbReference type="HAMAP" id="MF_00908">
    <property type="entry name" value="SeqA"/>
    <property type="match status" value="1"/>
</dbReference>
<dbReference type="InterPro" id="IPR013321">
    <property type="entry name" value="Arc_rbn_hlx_hlx"/>
</dbReference>
<dbReference type="InterPro" id="IPR010985">
    <property type="entry name" value="Ribbon_hlx_hlx"/>
</dbReference>
<dbReference type="InterPro" id="IPR005621">
    <property type="entry name" value="SeqA"/>
</dbReference>
<dbReference type="InterPro" id="IPR026577">
    <property type="entry name" value="SeqA_DNA-bd_C"/>
</dbReference>
<dbReference type="InterPro" id="IPR036835">
    <property type="entry name" value="SeqA_DNA-bd_C_sf"/>
</dbReference>
<dbReference type="InterPro" id="IPR033761">
    <property type="entry name" value="SeqA_N"/>
</dbReference>
<dbReference type="NCBIfam" id="NF008389">
    <property type="entry name" value="PRK11187.1"/>
    <property type="match status" value="1"/>
</dbReference>
<dbReference type="Pfam" id="PF03925">
    <property type="entry name" value="SeqA"/>
    <property type="match status" value="1"/>
</dbReference>
<dbReference type="Pfam" id="PF17206">
    <property type="entry name" value="SeqA_N"/>
    <property type="match status" value="1"/>
</dbReference>
<dbReference type="PIRSF" id="PIRSF019401">
    <property type="entry name" value="SeqA"/>
    <property type="match status" value="1"/>
</dbReference>
<dbReference type="SUPFAM" id="SSF82808">
    <property type="entry name" value="Replication modulator SeqA, C-terminal DNA-binding domain"/>
    <property type="match status" value="1"/>
</dbReference>
<dbReference type="SUPFAM" id="SSF47598">
    <property type="entry name" value="Ribbon-helix-helix"/>
    <property type="match status" value="1"/>
</dbReference>
<name>SEQA_SHIDS</name>
<proteinExistence type="inferred from homology"/>
<comment type="function">
    <text evidence="1">Negative regulator of replication initiation, which contributes to regulation of DNA replication and ensures that replication initiation occurs exactly once per chromosome per cell cycle. Binds to pairs of hemimethylated GATC sequences in the oriC region, thus preventing assembly of replication proteins and re-initiation at newly replicated origins. Repression is relieved when the region becomes fully methylated.</text>
</comment>
<comment type="subunit">
    <text evidence="1">Homodimer. Polymerizes to form helical filaments.</text>
</comment>
<comment type="subcellular location">
    <subcellularLocation>
        <location evidence="1">Cytoplasm</location>
    </subcellularLocation>
</comment>
<comment type="similarity">
    <text evidence="1">Belongs to the SeqA family.</text>
</comment>
<evidence type="ECO:0000255" key="1">
    <source>
        <dbReference type="HAMAP-Rule" id="MF_00908"/>
    </source>
</evidence>